<accession>B2T2B4</accession>
<proteinExistence type="inferred from homology"/>
<protein>
    <recommendedName>
        <fullName evidence="1">Potassium-transporting ATPase KdpC subunit</fullName>
    </recommendedName>
    <alternativeName>
        <fullName evidence="1">ATP phosphohydrolase [potassium-transporting] C chain</fullName>
    </alternativeName>
    <alternativeName>
        <fullName evidence="1">Potassium-binding and translocating subunit C</fullName>
    </alternativeName>
    <alternativeName>
        <fullName evidence="1">Potassium-translocating ATPase C chain</fullName>
    </alternativeName>
</protein>
<feature type="chain" id="PRO_1000114718" description="Potassium-transporting ATPase KdpC subunit">
    <location>
        <begin position="1"/>
        <end position="192"/>
    </location>
</feature>
<feature type="transmembrane region" description="Helical" evidence="1">
    <location>
        <begin position="7"/>
        <end position="27"/>
    </location>
</feature>
<dbReference type="EMBL" id="CP001052">
    <property type="protein sequence ID" value="ACD15725.1"/>
    <property type="molecule type" value="Genomic_DNA"/>
</dbReference>
<dbReference type="RefSeq" id="WP_012432344.1">
    <property type="nucleotide sequence ID" value="NC_010681.1"/>
</dbReference>
<dbReference type="SMR" id="B2T2B4"/>
<dbReference type="STRING" id="398527.Bphyt_1310"/>
<dbReference type="GeneID" id="97309920"/>
<dbReference type="KEGG" id="bpy:Bphyt_1310"/>
<dbReference type="eggNOG" id="COG2156">
    <property type="taxonomic scope" value="Bacteria"/>
</dbReference>
<dbReference type="HOGENOM" id="CLU_077094_2_0_4"/>
<dbReference type="OrthoDB" id="9788285at2"/>
<dbReference type="Proteomes" id="UP000001739">
    <property type="component" value="Chromosome 1"/>
</dbReference>
<dbReference type="GO" id="GO:0005886">
    <property type="term" value="C:plasma membrane"/>
    <property type="evidence" value="ECO:0007669"/>
    <property type="project" value="UniProtKB-SubCell"/>
</dbReference>
<dbReference type="GO" id="GO:0005524">
    <property type="term" value="F:ATP binding"/>
    <property type="evidence" value="ECO:0007669"/>
    <property type="project" value="UniProtKB-UniRule"/>
</dbReference>
<dbReference type="GO" id="GO:0008556">
    <property type="term" value="F:P-type potassium transmembrane transporter activity"/>
    <property type="evidence" value="ECO:0007669"/>
    <property type="project" value="InterPro"/>
</dbReference>
<dbReference type="HAMAP" id="MF_00276">
    <property type="entry name" value="KdpC"/>
    <property type="match status" value="1"/>
</dbReference>
<dbReference type="InterPro" id="IPR003820">
    <property type="entry name" value="KdpC"/>
</dbReference>
<dbReference type="NCBIfam" id="TIGR00681">
    <property type="entry name" value="kdpC"/>
    <property type="match status" value="1"/>
</dbReference>
<dbReference type="NCBIfam" id="NF001454">
    <property type="entry name" value="PRK00315.1"/>
    <property type="match status" value="1"/>
</dbReference>
<dbReference type="PANTHER" id="PTHR30042">
    <property type="entry name" value="POTASSIUM-TRANSPORTING ATPASE C CHAIN"/>
    <property type="match status" value="1"/>
</dbReference>
<dbReference type="PANTHER" id="PTHR30042:SF2">
    <property type="entry name" value="POTASSIUM-TRANSPORTING ATPASE KDPC SUBUNIT"/>
    <property type="match status" value="1"/>
</dbReference>
<dbReference type="Pfam" id="PF02669">
    <property type="entry name" value="KdpC"/>
    <property type="match status" value="1"/>
</dbReference>
<dbReference type="PIRSF" id="PIRSF001296">
    <property type="entry name" value="K_ATPase_KdpC"/>
    <property type="match status" value="1"/>
</dbReference>
<keyword id="KW-0067">ATP-binding</keyword>
<keyword id="KW-0997">Cell inner membrane</keyword>
<keyword id="KW-1003">Cell membrane</keyword>
<keyword id="KW-0406">Ion transport</keyword>
<keyword id="KW-0472">Membrane</keyword>
<keyword id="KW-0547">Nucleotide-binding</keyword>
<keyword id="KW-0630">Potassium</keyword>
<keyword id="KW-0633">Potassium transport</keyword>
<keyword id="KW-0812">Transmembrane</keyword>
<keyword id="KW-1133">Transmembrane helix</keyword>
<keyword id="KW-0813">Transport</keyword>
<organism>
    <name type="scientific">Paraburkholderia phytofirmans (strain DSM 17436 / LMG 22146 / PsJN)</name>
    <name type="common">Burkholderia phytofirmans</name>
    <dbReference type="NCBI Taxonomy" id="398527"/>
    <lineage>
        <taxon>Bacteria</taxon>
        <taxon>Pseudomonadati</taxon>
        <taxon>Pseudomonadota</taxon>
        <taxon>Betaproteobacteria</taxon>
        <taxon>Burkholderiales</taxon>
        <taxon>Burkholderiaceae</taxon>
        <taxon>Paraburkholderia</taxon>
    </lineage>
</organism>
<sequence length="192" mass="20246">MKNLFRPLIVIFAVLTAVTGLAYPAVMTAVGQAAFSDQANGSMLEQDGKVVGSKLIGQQFDAPQYFWGRLSATSPMPYNAQGSGGSNLGPTNPALLDEIKGRIDALKTAGTDMSKPVPVDLVTSSGSGLDPEISPAAAAYQIERVAKARKLAANDVQALVDRYTSGRQFGILGEPRVNVLQLNLALDEMKHG</sequence>
<evidence type="ECO:0000255" key="1">
    <source>
        <dbReference type="HAMAP-Rule" id="MF_00276"/>
    </source>
</evidence>
<comment type="function">
    <text evidence="1">Part of the high-affinity ATP-driven potassium transport (or Kdp) system, which catalyzes the hydrolysis of ATP coupled with the electrogenic transport of potassium into the cytoplasm. This subunit acts as a catalytic chaperone that increases the ATP-binding affinity of the ATP-hydrolyzing subunit KdpB by the formation of a transient KdpB/KdpC/ATP ternary complex.</text>
</comment>
<comment type="subunit">
    <text evidence="1">The system is composed of three essential subunits: KdpA, KdpB and KdpC.</text>
</comment>
<comment type="subcellular location">
    <subcellularLocation>
        <location evidence="1">Cell inner membrane</location>
        <topology evidence="1">Single-pass membrane protein</topology>
    </subcellularLocation>
</comment>
<comment type="similarity">
    <text evidence="1">Belongs to the KdpC family.</text>
</comment>
<reference key="1">
    <citation type="journal article" date="2011" name="J. Bacteriol.">
        <title>Complete genome sequence of the plant growth-promoting endophyte Burkholderia phytofirmans strain PsJN.</title>
        <authorList>
            <person name="Weilharter A."/>
            <person name="Mitter B."/>
            <person name="Shin M.V."/>
            <person name="Chain P.S."/>
            <person name="Nowak J."/>
            <person name="Sessitsch A."/>
        </authorList>
    </citation>
    <scope>NUCLEOTIDE SEQUENCE [LARGE SCALE GENOMIC DNA]</scope>
    <source>
        <strain>DSM 17436 / LMG 22146 / PsJN</strain>
    </source>
</reference>
<name>KDPC_PARPJ</name>
<gene>
    <name evidence="1" type="primary">kdpC</name>
    <name type="ordered locus">Bphyt_1310</name>
</gene>